<dbReference type="SMR" id="P84632"/>
<dbReference type="GO" id="GO:0005576">
    <property type="term" value="C:extracellular region"/>
    <property type="evidence" value="ECO:0007669"/>
    <property type="project" value="UniProtKB-SubCell"/>
</dbReference>
<dbReference type="GO" id="GO:0045735">
    <property type="term" value="F:nutrient reservoir activity"/>
    <property type="evidence" value="ECO:0007669"/>
    <property type="project" value="UniProtKB-KW"/>
</dbReference>
<comment type="function">
    <text evidence="2">Larval storage protein (LSP) which may serve as a store of amino acids for synthesis of adult proteins. The biosynthesis, accumulation and sequestration of storage protein-1 takes place during metamorphosis and saves energy for the non-feeding pupal stage. May also be essential for egg formation.</text>
</comment>
<comment type="subcellular location">
    <subcellularLocation>
        <location evidence="2">Secreted</location>
    </subcellularLocation>
</comment>
<comment type="tissue specificity">
    <text evidence="2">Expressed in fat body and ovary.</text>
</comment>
<comment type="developmental stage">
    <text evidence="2">Synthesized during the last larval stage in peripheral fat tissues and sequestered in the perivisceral fat tissues during larval-pupal transformation.</text>
</comment>
<comment type="similarity">
    <text evidence="1">Belongs to the hemocyanin family.</text>
</comment>
<feature type="chain" id="PRO_0000204252" description="Sex-specific storage protein 1">
    <location>
        <begin position="1"/>
        <end position="56" status="greater than"/>
    </location>
</feature>
<feature type="non-terminal residue" evidence="3">
    <location>
        <position position="56"/>
    </location>
</feature>
<keyword id="KW-0903">Direct protein sequencing</keyword>
<keyword id="KW-0964">Secreted</keyword>
<keyword id="KW-0758">Storage protein</keyword>
<proteinExistence type="evidence at protein level"/>
<name>SSP1_AMSAL</name>
<accession>P84632</accession>
<evidence type="ECO:0000255" key="1"/>
<evidence type="ECO:0000269" key="2">
    <source ref="1"/>
</evidence>
<evidence type="ECO:0000303" key="3">
    <source ref="1"/>
</evidence>
<evidence type="ECO:0000305" key="4"/>
<protein>
    <recommendedName>
        <fullName>Sex-specific storage protein 1</fullName>
        <shortName>SP-1</shortName>
    </recommendedName>
</protein>
<organism>
    <name type="scientific">Amsacta albistriga</name>
    <name type="common">Red hairy caterpillar</name>
    <dbReference type="NCBI Taxonomy" id="340056"/>
    <lineage>
        <taxon>Eukaryota</taxon>
        <taxon>Metazoa</taxon>
        <taxon>Ecdysozoa</taxon>
        <taxon>Arthropoda</taxon>
        <taxon>Hexapoda</taxon>
        <taxon>Insecta</taxon>
        <taxon>Pterygota</taxon>
        <taxon>Neoptera</taxon>
        <taxon>Endopterygota</taxon>
        <taxon>Lepidoptera</taxon>
        <taxon>Glossata</taxon>
        <taxon>Ditrysia</taxon>
        <taxon>Noctuoidea</taxon>
        <taxon>Erebidae</taxon>
        <taxon>Arctiinae</taxon>
        <taxon>Amsacta</taxon>
    </lineage>
</organism>
<sequence length="56" mass="6152">MRSVLVLACLAAASASAISDGMYGTMVFTKDMMVNLDMKMKELCIMKLLNHILQPT</sequence>
<reference evidence="4" key="1">
    <citation type="thesis" date="2005" institute="Bharathidasan University" country="India">
        <title>Establishment of fat body heterogenity and identification of storage protein granules in groundnut pest, Amsacta albistriga.</title>
        <authorList>
            <person name="Chandrasekar R."/>
            <person name="Krishnan M."/>
        </authorList>
    </citation>
    <scope>PROTEIN SEQUENCE</scope>
    <source>
        <tissue evidence="2">Larval fat body</tissue>
    </source>
</reference>